<feature type="chain" id="PRO_0000182108" description="UDP-N-acetylmuramate--L-alanine ligase">
    <location>
        <begin position="1"/>
        <end position="469"/>
    </location>
</feature>
<feature type="binding site" evidence="1">
    <location>
        <begin position="122"/>
        <end position="128"/>
    </location>
    <ligand>
        <name>ATP</name>
        <dbReference type="ChEBI" id="CHEBI:30616"/>
    </ligand>
</feature>
<gene>
    <name evidence="1" type="primary">murC</name>
    <name type="ordered locus">lpp2667</name>
</gene>
<sequence>MNNSEQFLSPRMGRVEQIHFVGIGGAGMCGIAEVLHNQGYRITGSDLGESGTVQRLRSLGIQVYIGHRLENIKGADVVVRSSAVDFNNPEIVAARELMIPVIPRAAMLAELMRFRHGIAIAGTHGKTTTTSLVSSLLAEGGLDPSFVIGGKLNSCGANAQLGKSAYFVVEADESDASFLFLKPMMAVVTNIDADHMDTYEGDFEKLRTTFLEFLHHLPFYGLAVVCLEDEEICRILPAIQRPTLTYGFKEEAHYRAINWTQKGMLSEFVVVRPAPHKQLTIQFQYPGRHNVLNALASIAIATELGVDDDSIVRGLQKFQGVGRRFQMLGEKQFEKGAAIIVDDYGHHPQEILSTIDAFRRVWPERRLVHVFQPHRYTRTQSLHRQFVDVLSLSDELLLMDIYAAGETAIPGVTSENLANEIRSRDKRVTIVSEQSLKATLDEFIKDGDVILMQGAGSIGQMAVNLMKNM</sequence>
<dbReference type="EC" id="6.3.2.8" evidence="1"/>
<dbReference type="EMBL" id="CR628336">
    <property type="protein sequence ID" value="CAH13820.1"/>
    <property type="molecule type" value="Genomic_DNA"/>
</dbReference>
<dbReference type="RefSeq" id="WP_011947533.1">
    <property type="nucleotide sequence ID" value="NC_006368.1"/>
</dbReference>
<dbReference type="SMR" id="Q5X1S6"/>
<dbReference type="KEGG" id="lpp:lpp2667"/>
<dbReference type="LegioList" id="lpp2667"/>
<dbReference type="HOGENOM" id="CLU_028104_2_2_6"/>
<dbReference type="UniPathway" id="UPA00219"/>
<dbReference type="GO" id="GO:0005737">
    <property type="term" value="C:cytoplasm"/>
    <property type="evidence" value="ECO:0007669"/>
    <property type="project" value="UniProtKB-SubCell"/>
</dbReference>
<dbReference type="GO" id="GO:0005524">
    <property type="term" value="F:ATP binding"/>
    <property type="evidence" value="ECO:0007669"/>
    <property type="project" value="UniProtKB-UniRule"/>
</dbReference>
<dbReference type="GO" id="GO:0008763">
    <property type="term" value="F:UDP-N-acetylmuramate-L-alanine ligase activity"/>
    <property type="evidence" value="ECO:0007669"/>
    <property type="project" value="UniProtKB-UniRule"/>
</dbReference>
<dbReference type="GO" id="GO:0051301">
    <property type="term" value="P:cell division"/>
    <property type="evidence" value="ECO:0007669"/>
    <property type="project" value="UniProtKB-KW"/>
</dbReference>
<dbReference type="GO" id="GO:0071555">
    <property type="term" value="P:cell wall organization"/>
    <property type="evidence" value="ECO:0007669"/>
    <property type="project" value="UniProtKB-KW"/>
</dbReference>
<dbReference type="GO" id="GO:0009252">
    <property type="term" value="P:peptidoglycan biosynthetic process"/>
    <property type="evidence" value="ECO:0007669"/>
    <property type="project" value="UniProtKB-UniRule"/>
</dbReference>
<dbReference type="GO" id="GO:0008360">
    <property type="term" value="P:regulation of cell shape"/>
    <property type="evidence" value="ECO:0007669"/>
    <property type="project" value="UniProtKB-KW"/>
</dbReference>
<dbReference type="FunFam" id="3.40.1190.10:FF:000001">
    <property type="entry name" value="UDP-N-acetylmuramate--L-alanine ligase"/>
    <property type="match status" value="1"/>
</dbReference>
<dbReference type="Gene3D" id="3.90.190.20">
    <property type="entry name" value="Mur ligase, C-terminal domain"/>
    <property type="match status" value="1"/>
</dbReference>
<dbReference type="Gene3D" id="3.40.1190.10">
    <property type="entry name" value="Mur-like, catalytic domain"/>
    <property type="match status" value="1"/>
</dbReference>
<dbReference type="Gene3D" id="3.40.50.720">
    <property type="entry name" value="NAD(P)-binding Rossmann-like Domain"/>
    <property type="match status" value="1"/>
</dbReference>
<dbReference type="HAMAP" id="MF_00046">
    <property type="entry name" value="MurC"/>
    <property type="match status" value="1"/>
</dbReference>
<dbReference type="InterPro" id="IPR036565">
    <property type="entry name" value="Mur-like_cat_sf"/>
</dbReference>
<dbReference type="InterPro" id="IPR004101">
    <property type="entry name" value="Mur_ligase_C"/>
</dbReference>
<dbReference type="InterPro" id="IPR036615">
    <property type="entry name" value="Mur_ligase_C_dom_sf"/>
</dbReference>
<dbReference type="InterPro" id="IPR013221">
    <property type="entry name" value="Mur_ligase_cen"/>
</dbReference>
<dbReference type="InterPro" id="IPR000713">
    <property type="entry name" value="Mur_ligase_N"/>
</dbReference>
<dbReference type="InterPro" id="IPR050061">
    <property type="entry name" value="MurCDEF_pg_biosynth"/>
</dbReference>
<dbReference type="InterPro" id="IPR005758">
    <property type="entry name" value="UDP-N-AcMur_Ala_ligase_MurC"/>
</dbReference>
<dbReference type="NCBIfam" id="TIGR01082">
    <property type="entry name" value="murC"/>
    <property type="match status" value="1"/>
</dbReference>
<dbReference type="PANTHER" id="PTHR43445:SF3">
    <property type="entry name" value="UDP-N-ACETYLMURAMATE--L-ALANINE LIGASE"/>
    <property type="match status" value="1"/>
</dbReference>
<dbReference type="PANTHER" id="PTHR43445">
    <property type="entry name" value="UDP-N-ACETYLMURAMATE--L-ALANINE LIGASE-RELATED"/>
    <property type="match status" value="1"/>
</dbReference>
<dbReference type="Pfam" id="PF01225">
    <property type="entry name" value="Mur_ligase"/>
    <property type="match status" value="1"/>
</dbReference>
<dbReference type="Pfam" id="PF02875">
    <property type="entry name" value="Mur_ligase_C"/>
    <property type="match status" value="1"/>
</dbReference>
<dbReference type="Pfam" id="PF08245">
    <property type="entry name" value="Mur_ligase_M"/>
    <property type="match status" value="1"/>
</dbReference>
<dbReference type="SUPFAM" id="SSF51984">
    <property type="entry name" value="MurCD N-terminal domain"/>
    <property type="match status" value="1"/>
</dbReference>
<dbReference type="SUPFAM" id="SSF53623">
    <property type="entry name" value="MurD-like peptide ligases, catalytic domain"/>
    <property type="match status" value="1"/>
</dbReference>
<dbReference type="SUPFAM" id="SSF53244">
    <property type="entry name" value="MurD-like peptide ligases, peptide-binding domain"/>
    <property type="match status" value="1"/>
</dbReference>
<keyword id="KW-0067">ATP-binding</keyword>
<keyword id="KW-0131">Cell cycle</keyword>
<keyword id="KW-0132">Cell division</keyword>
<keyword id="KW-0133">Cell shape</keyword>
<keyword id="KW-0961">Cell wall biogenesis/degradation</keyword>
<keyword id="KW-0963">Cytoplasm</keyword>
<keyword id="KW-0436">Ligase</keyword>
<keyword id="KW-0547">Nucleotide-binding</keyword>
<keyword id="KW-0573">Peptidoglycan synthesis</keyword>
<name>MURC_LEGPA</name>
<accession>Q5X1S6</accession>
<organism>
    <name type="scientific">Legionella pneumophila (strain Paris)</name>
    <dbReference type="NCBI Taxonomy" id="297246"/>
    <lineage>
        <taxon>Bacteria</taxon>
        <taxon>Pseudomonadati</taxon>
        <taxon>Pseudomonadota</taxon>
        <taxon>Gammaproteobacteria</taxon>
        <taxon>Legionellales</taxon>
        <taxon>Legionellaceae</taxon>
        <taxon>Legionella</taxon>
    </lineage>
</organism>
<protein>
    <recommendedName>
        <fullName evidence="1">UDP-N-acetylmuramate--L-alanine ligase</fullName>
        <ecNumber evidence="1">6.3.2.8</ecNumber>
    </recommendedName>
    <alternativeName>
        <fullName evidence="1">UDP-N-acetylmuramoyl-L-alanine synthetase</fullName>
    </alternativeName>
</protein>
<proteinExistence type="inferred from homology"/>
<reference key="1">
    <citation type="journal article" date="2004" name="Nat. Genet.">
        <title>Evidence in the Legionella pneumophila genome for exploitation of host cell functions and high genome plasticity.</title>
        <authorList>
            <person name="Cazalet C."/>
            <person name="Rusniok C."/>
            <person name="Brueggemann H."/>
            <person name="Zidane N."/>
            <person name="Magnier A."/>
            <person name="Ma L."/>
            <person name="Tichit M."/>
            <person name="Jarraud S."/>
            <person name="Bouchier C."/>
            <person name="Vandenesch F."/>
            <person name="Kunst F."/>
            <person name="Etienne J."/>
            <person name="Glaser P."/>
            <person name="Buchrieser C."/>
        </authorList>
    </citation>
    <scope>NUCLEOTIDE SEQUENCE [LARGE SCALE GENOMIC DNA]</scope>
    <source>
        <strain>Paris</strain>
    </source>
</reference>
<evidence type="ECO:0000255" key="1">
    <source>
        <dbReference type="HAMAP-Rule" id="MF_00046"/>
    </source>
</evidence>
<comment type="function">
    <text evidence="1">Cell wall formation.</text>
</comment>
<comment type="catalytic activity">
    <reaction evidence="1">
        <text>UDP-N-acetyl-alpha-D-muramate + L-alanine + ATP = UDP-N-acetyl-alpha-D-muramoyl-L-alanine + ADP + phosphate + H(+)</text>
        <dbReference type="Rhea" id="RHEA:23372"/>
        <dbReference type="ChEBI" id="CHEBI:15378"/>
        <dbReference type="ChEBI" id="CHEBI:30616"/>
        <dbReference type="ChEBI" id="CHEBI:43474"/>
        <dbReference type="ChEBI" id="CHEBI:57972"/>
        <dbReference type="ChEBI" id="CHEBI:70757"/>
        <dbReference type="ChEBI" id="CHEBI:83898"/>
        <dbReference type="ChEBI" id="CHEBI:456216"/>
        <dbReference type="EC" id="6.3.2.8"/>
    </reaction>
</comment>
<comment type="pathway">
    <text evidence="1">Cell wall biogenesis; peptidoglycan biosynthesis.</text>
</comment>
<comment type="subcellular location">
    <subcellularLocation>
        <location evidence="1">Cytoplasm</location>
    </subcellularLocation>
</comment>
<comment type="similarity">
    <text evidence="1">Belongs to the MurCDEF family.</text>
</comment>